<protein>
    <recommendedName>
        <fullName evidence="1">Aspartate carbamoyltransferase catalytic subunit</fullName>
        <ecNumber evidence="1">2.1.3.2</ecNumber>
    </recommendedName>
    <alternativeName>
        <fullName evidence="1">Aspartate transcarbamylase</fullName>
        <shortName evidence="1">ATCase</shortName>
    </alternativeName>
</protein>
<accession>Q1R309</accession>
<name>PYRB_ECOUT</name>
<dbReference type="EC" id="2.1.3.2" evidence="1"/>
<dbReference type="EMBL" id="CP000243">
    <property type="protein sequence ID" value="ABE10255.1"/>
    <property type="molecule type" value="Genomic_DNA"/>
</dbReference>
<dbReference type="RefSeq" id="WP_000013046.1">
    <property type="nucleotide sequence ID" value="NZ_CP064825.1"/>
</dbReference>
<dbReference type="SMR" id="Q1R309"/>
<dbReference type="GeneID" id="93777579"/>
<dbReference type="KEGG" id="eci:UTI89_C4851"/>
<dbReference type="HOGENOM" id="CLU_043846_1_2_6"/>
<dbReference type="UniPathway" id="UPA00070">
    <property type="reaction ID" value="UER00116"/>
</dbReference>
<dbReference type="Proteomes" id="UP000001952">
    <property type="component" value="Chromosome"/>
</dbReference>
<dbReference type="GO" id="GO:0005829">
    <property type="term" value="C:cytosol"/>
    <property type="evidence" value="ECO:0007669"/>
    <property type="project" value="TreeGrafter"/>
</dbReference>
<dbReference type="GO" id="GO:0016597">
    <property type="term" value="F:amino acid binding"/>
    <property type="evidence" value="ECO:0007669"/>
    <property type="project" value="InterPro"/>
</dbReference>
<dbReference type="GO" id="GO:0004070">
    <property type="term" value="F:aspartate carbamoyltransferase activity"/>
    <property type="evidence" value="ECO:0007669"/>
    <property type="project" value="UniProtKB-UniRule"/>
</dbReference>
<dbReference type="GO" id="GO:0006207">
    <property type="term" value="P:'de novo' pyrimidine nucleobase biosynthetic process"/>
    <property type="evidence" value="ECO:0007669"/>
    <property type="project" value="InterPro"/>
</dbReference>
<dbReference type="GO" id="GO:0044205">
    <property type="term" value="P:'de novo' UMP biosynthetic process"/>
    <property type="evidence" value="ECO:0007669"/>
    <property type="project" value="UniProtKB-UniRule"/>
</dbReference>
<dbReference type="GO" id="GO:0006520">
    <property type="term" value="P:amino acid metabolic process"/>
    <property type="evidence" value="ECO:0007669"/>
    <property type="project" value="InterPro"/>
</dbReference>
<dbReference type="FunFam" id="3.40.50.1370:FF:000001">
    <property type="entry name" value="Aspartate carbamoyltransferase"/>
    <property type="match status" value="1"/>
</dbReference>
<dbReference type="FunFam" id="3.40.50.1370:FF:000002">
    <property type="entry name" value="Aspartate carbamoyltransferase 2"/>
    <property type="match status" value="1"/>
</dbReference>
<dbReference type="Gene3D" id="3.40.50.1370">
    <property type="entry name" value="Aspartate/ornithine carbamoyltransferase"/>
    <property type="match status" value="2"/>
</dbReference>
<dbReference type="HAMAP" id="MF_00001">
    <property type="entry name" value="Asp_carb_tr"/>
    <property type="match status" value="1"/>
</dbReference>
<dbReference type="InterPro" id="IPR006132">
    <property type="entry name" value="Asp/Orn_carbamoyltranf_P-bd"/>
</dbReference>
<dbReference type="InterPro" id="IPR006130">
    <property type="entry name" value="Asp/Orn_carbamoylTrfase"/>
</dbReference>
<dbReference type="InterPro" id="IPR036901">
    <property type="entry name" value="Asp/Orn_carbamoylTrfase_sf"/>
</dbReference>
<dbReference type="InterPro" id="IPR002082">
    <property type="entry name" value="Asp_carbamoyltransf"/>
</dbReference>
<dbReference type="InterPro" id="IPR006131">
    <property type="entry name" value="Asp_carbamoyltransf_Asp/Orn-bd"/>
</dbReference>
<dbReference type="NCBIfam" id="TIGR00670">
    <property type="entry name" value="asp_carb_tr"/>
    <property type="match status" value="1"/>
</dbReference>
<dbReference type="NCBIfam" id="NF002032">
    <property type="entry name" value="PRK00856.1"/>
    <property type="match status" value="1"/>
</dbReference>
<dbReference type="PANTHER" id="PTHR45753:SF6">
    <property type="entry name" value="ASPARTATE CARBAMOYLTRANSFERASE"/>
    <property type="match status" value="1"/>
</dbReference>
<dbReference type="PANTHER" id="PTHR45753">
    <property type="entry name" value="ORNITHINE CARBAMOYLTRANSFERASE, MITOCHONDRIAL"/>
    <property type="match status" value="1"/>
</dbReference>
<dbReference type="Pfam" id="PF00185">
    <property type="entry name" value="OTCace"/>
    <property type="match status" value="1"/>
</dbReference>
<dbReference type="Pfam" id="PF02729">
    <property type="entry name" value="OTCace_N"/>
    <property type="match status" value="1"/>
</dbReference>
<dbReference type="PRINTS" id="PR00100">
    <property type="entry name" value="AOTCASE"/>
</dbReference>
<dbReference type="PRINTS" id="PR00101">
    <property type="entry name" value="ATCASE"/>
</dbReference>
<dbReference type="SUPFAM" id="SSF53671">
    <property type="entry name" value="Aspartate/ornithine carbamoyltransferase"/>
    <property type="match status" value="1"/>
</dbReference>
<dbReference type="PROSITE" id="PS00097">
    <property type="entry name" value="CARBAMOYLTRANSFERASE"/>
    <property type="match status" value="1"/>
</dbReference>
<evidence type="ECO:0000255" key="1">
    <source>
        <dbReference type="HAMAP-Rule" id="MF_00001"/>
    </source>
</evidence>
<reference key="1">
    <citation type="journal article" date="2006" name="Proc. Natl. Acad. Sci. U.S.A.">
        <title>Identification of genes subject to positive selection in uropathogenic strains of Escherichia coli: a comparative genomics approach.</title>
        <authorList>
            <person name="Chen S.L."/>
            <person name="Hung C.-S."/>
            <person name="Xu J."/>
            <person name="Reigstad C.S."/>
            <person name="Magrini V."/>
            <person name="Sabo A."/>
            <person name="Blasiar D."/>
            <person name="Bieri T."/>
            <person name="Meyer R.R."/>
            <person name="Ozersky P."/>
            <person name="Armstrong J.R."/>
            <person name="Fulton R.S."/>
            <person name="Latreille J.P."/>
            <person name="Spieth J."/>
            <person name="Hooton T.M."/>
            <person name="Mardis E.R."/>
            <person name="Hultgren S.J."/>
            <person name="Gordon J.I."/>
        </authorList>
    </citation>
    <scope>NUCLEOTIDE SEQUENCE [LARGE SCALE GENOMIC DNA]</scope>
    <source>
        <strain>UTI89 / UPEC</strain>
    </source>
</reference>
<proteinExistence type="inferred from homology"/>
<organism>
    <name type="scientific">Escherichia coli (strain UTI89 / UPEC)</name>
    <dbReference type="NCBI Taxonomy" id="364106"/>
    <lineage>
        <taxon>Bacteria</taxon>
        <taxon>Pseudomonadati</taxon>
        <taxon>Pseudomonadota</taxon>
        <taxon>Gammaproteobacteria</taxon>
        <taxon>Enterobacterales</taxon>
        <taxon>Enterobacteriaceae</taxon>
        <taxon>Escherichia</taxon>
    </lineage>
</organism>
<sequence>MANPLYQKHIISINDLSRDDLNLVLATAAKLKANPQPELLKHKVIASCFFEASTRTRLSFETSMHRLGASVVGFSDSANTSLGKKGETLADTISVISTYVDAIVMRHPQEGAARLATEFSGNVPVLNAGDGSNQHPTQTLLDLFTIQETQGRLDNLHVAMVGDLKYGRTVHSLTQALAKFDGNRFYFIAPDALAMPQYILDMLDEKGIAWSLHSSIEEVMAEVDILYMTRVQKERLDPSEYANVKAQFVLRASDLHNAKANMKVLHPLPRVDEIATDVDKTPHAWYFQQAGNGIFARQALLALVLNRDLVL</sequence>
<keyword id="KW-0665">Pyrimidine biosynthesis</keyword>
<keyword id="KW-0808">Transferase</keyword>
<feature type="chain" id="PRO_0000301572" description="Aspartate carbamoyltransferase catalytic subunit">
    <location>
        <begin position="1"/>
        <end position="311"/>
    </location>
</feature>
<feature type="binding site" evidence="1">
    <location>
        <position position="55"/>
    </location>
    <ligand>
        <name>carbamoyl phosphate</name>
        <dbReference type="ChEBI" id="CHEBI:58228"/>
    </ligand>
</feature>
<feature type="binding site" evidence="1">
    <location>
        <position position="56"/>
    </location>
    <ligand>
        <name>carbamoyl phosphate</name>
        <dbReference type="ChEBI" id="CHEBI:58228"/>
    </ligand>
</feature>
<feature type="binding site" evidence="1">
    <location>
        <position position="85"/>
    </location>
    <ligand>
        <name>L-aspartate</name>
        <dbReference type="ChEBI" id="CHEBI:29991"/>
    </ligand>
</feature>
<feature type="binding site" evidence="1">
    <location>
        <position position="106"/>
    </location>
    <ligand>
        <name>carbamoyl phosphate</name>
        <dbReference type="ChEBI" id="CHEBI:58228"/>
    </ligand>
</feature>
<feature type="binding site" evidence="1">
    <location>
        <position position="135"/>
    </location>
    <ligand>
        <name>carbamoyl phosphate</name>
        <dbReference type="ChEBI" id="CHEBI:58228"/>
    </ligand>
</feature>
<feature type="binding site" evidence="1">
    <location>
        <position position="138"/>
    </location>
    <ligand>
        <name>carbamoyl phosphate</name>
        <dbReference type="ChEBI" id="CHEBI:58228"/>
    </ligand>
</feature>
<feature type="binding site" evidence="1">
    <location>
        <position position="168"/>
    </location>
    <ligand>
        <name>L-aspartate</name>
        <dbReference type="ChEBI" id="CHEBI:29991"/>
    </ligand>
</feature>
<feature type="binding site" evidence="1">
    <location>
        <position position="230"/>
    </location>
    <ligand>
        <name>L-aspartate</name>
        <dbReference type="ChEBI" id="CHEBI:29991"/>
    </ligand>
</feature>
<feature type="binding site" evidence="1">
    <location>
        <position position="268"/>
    </location>
    <ligand>
        <name>carbamoyl phosphate</name>
        <dbReference type="ChEBI" id="CHEBI:58228"/>
    </ligand>
</feature>
<feature type="binding site" evidence="1">
    <location>
        <position position="269"/>
    </location>
    <ligand>
        <name>carbamoyl phosphate</name>
        <dbReference type="ChEBI" id="CHEBI:58228"/>
    </ligand>
</feature>
<gene>
    <name evidence="1" type="primary">pyrB</name>
    <name type="ordered locus">UTI89_C4851</name>
</gene>
<comment type="function">
    <text evidence="1">Catalyzes the condensation of carbamoyl phosphate and aspartate to form carbamoyl aspartate and inorganic phosphate, the committed step in the de novo pyrimidine nucleotide biosynthesis pathway.</text>
</comment>
<comment type="catalytic activity">
    <reaction evidence="1">
        <text>carbamoyl phosphate + L-aspartate = N-carbamoyl-L-aspartate + phosphate + H(+)</text>
        <dbReference type="Rhea" id="RHEA:20013"/>
        <dbReference type="ChEBI" id="CHEBI:15378"/>
        <dbReference type="ChEBI" id="CHEBI:29991"/>
        <dbReference type="ChEBI" id="CHEBI:32814"/>
        <dbReference type="ChEBI" id="CHEBI:43474"/>
        <dbReference type="ChEBI" id="CHEBI:58228"/>
        <dbReference type="EC" id="2.1.3.2"/>
    </reaction>
</comment>
<comment type="pathway">
    <text evidence="1">Pyrimidine metabolism; UMP biosynthesis via de novo pathway; (S)-dihydroorotate from bicarbonate: step 2/3.</text>
</comment>
<comment type="subunit">
    <text evidence="1">Heterododecamer (2C3:3R2) of six catalytic PyrB chains organized as two trimers (C3), and six regulatory PyrI chains organized as three dimers (R2).</text>
</comment>
<comment type="similarity">
    <text evidence="1">Belongs to the aspartate/ornithine carbamoyltransferase superfamily. ATCase family.</text>
</comment>